<protein>
    <recommendedName>
        <fullName evidence="1">Ribonuclease P protein component</fullName>
        <shortName evidence="1">RNase P protein</shortName>
        <shortName evidence="1">RNaseP protein</shortName>
        <ecNumber evidence="1">3.1.26.5</ecNumber>
    </recommendedName>
    <alternativeName>
        <fullName evidence="1">Protein C5</fullName>
    </alternativeName>
</protein>
<proteinExistence type="inferred from homology"/>
<keyword id="KW-0255">Endonuclease</keyword>
<keyword id="KW-0378">Hydrolase</keyword>
<keyword id="KW-0540">Nuclease</keyword>
<keyword id="KW-0694">RNA-binding</keyword>
<keyword id="KW-0819">tRNA processing</keyword>
<organism>
    <name type="scientific">Shewanella sp. (strain MR-7)</name>
    <dbReference type="NCBI Taxonomy" id="60481"/>
    <lineage>
        <taxon>Bacteria</taxon>
        <taxon>Pseudomonadati</taxon>
        <taxon>Pseudomonadota</taxon>
        <taxon>Gammaproteobacteria</taxon>
        <taxon>Alteromonadales</taxon>
        <taxon>Shewanellaceae</taxon>
        <taxon>Shewanella</taxon>
    </lineage>
</organism>
<comment type="function">
    <text evidence="1">RNaseP catalyzes the removal of the 5'-leader sequence from pre-tRNA to produce the mature 5'-terminus. It can also cleave other RNA substrates such as 4.5S RNA. The protein component plays an auxiliary but essential role in vivo by binding to the 5'-leader sequence and broadening the substrate specificity of the ribozyme.</text>
</comment>
<comment type="catalytic activity">
    <reaction evidence="1">
        <text>Endonucleolytic cleavage of RNA, removing 5'-extranucleotides from tRNA precursor.</text>
        <dbReference type="EC" id="3.1.26.5"/>
    </reaction>
</comment>
<comment type="subunit">
    <text evidence="1">Consists of a catalytic RNA component (M1 or rnpB) and a protein subunit.</text>
</comment>
<comment type="similarity">
    <text evidence="1">Belongs to the RnpA family.</text>
</comment>
<accession>Q0HPE4</accession>
<reference key="1">
    <citation type="submission" date="2006-08" db="EMBL/GenBank/DDBJ databases">
        <title>Complete sequence of chromosome 1 of Shewanella sp. MR-7.</title>
        <authorList>
            <person name="Copeland A."/>
            <person name="Lucas S."/>
            <person name="Lapidus A."/>
            <person name="Barry K."/>
            <person name="Detter J.C."/>
            <person name="Glavina del Rio T."/>
            <person name="Hammon N."/>
            <person name="Israni S."/>
            <person name="Dalin E."/>
            <person name="Tice H."/>
            <person name="Pitluck S."/>
            <person name="Kiss H."/>
            <person name="Brettin T."/>
            <person name="Bruce D."/>
            <person name="Han C."/>
            <person name="Tapia R."/>
            <person name="Gilna P."/>
            <person name="Schmutz J."/>
            <person name="Larimer F."/>
            <person name="Land M."/>
            <person name="Hauser L."/>
            <person name="Kyrpides N."/>
            <person name="Mikhailova N."/>
            <person name="Nealson K."/>
            <person name="Konstantinidis K."/>
            <person name="Klappenbach J."/>
            <person name="Tiedje J."/>
            <person name="Richardson P."/>
        </authorList>
    </citation>
    <scope>NUCLEOTIDE SEQUENCE [LARGE SCALE GENOMIC DNA]</scope>
    <source>
        <strain>MR-7</strain>
    </source>
</reference>
<dbReference type="EC" id="3.1.26.5" evidence="1"/>
<dbReference type="EMBL" id="CP000444">
    <property type="protein sequence ID" value="ABI45011.1"/>
    <property type="molecule type" value="Genomic_DNA"/>
</dbReference>
<dbReference type="SMR" id="Q0HPE4"/>
<dbReference type="KEGG" id="shm:Shewmr7_4034"/>
<dbReference type="HOGENOM" id="CLU_117179_11_0_6"/>
<dbReference type="GO" id="GO:0030677">
    <property type="term" value="C:ribonuclease P complex"/>
    <property type="evidence" value="ECO:0007669"/>
    <property type="project" value="TreeGrafter"/>
</dbReference>
<dbReference type="GO" id="GO:0042781">
    <property type="term" value="F:3'-tRNA processing endoribonuclease activity"/>
    <property type="evidence" value="ECO:0007669"/>
    <property type="project" value="TreeGrafter"/>
</dbReference>
<dbReference type="GO" id="GO:0004526">
    <property type="term" value="F:ribonuclease P activity"/>
    <property type="evidence" value="ECO:0007669"/>
    <property type="project" value="UniProtKB-UniRule"/>
</dbReference>
<dbReference type="GO" id="GO:0000049">
    <property type="term" value="F:tRNA binding"/>
    <property type="evidence" value="ECO:0007669"/>
    <property type="project" value="UniProtKB-UniRule"/>
</dbReference>
<dbReference type="GO" id="GO:0001682">
    <property type="term" value="P:tRNA 5'-leader removal"/>
    <property type="evidence" value="ECO:0007669"/>
    <property type="project" value="UniProtKB-UniRule"/>
</dbReference>
<dbReference type="FunFam" id="3.30.230.10:FF:000016">
    <property type="entry name" value="Ribonuclease P protein component"/>
    <property type="match status" value="1"/>
</dbReference>
<dbReference type="Gene3D" id="3.30.230.10">
    <property type="match status" value="1"/>
</dbReference>
<dbReference type="HAMAP" id="MF_00227">
    <property type="entry name" value="RNase_P"/>
    <property type="match status" value="1"/>
</dbReference>
<dbReference type="InterPro" id="IPR020568">
    <property type="entry name" value="Ribosomal_Su5_D2-typ_SF"/>
</dbReference>
<dbReference type="InterPro" id="IPR014721">
    <property type="entry name" value="Ribsml_uS5_D2-typ_fold_subgr"/>
</dbReference>
<dbReference type="InterPro" id="IPR000100">
    <property type="entry name" value="RNase_P"/>
</dbReference>
<dbReference type="InterPro" id="IPR020539">
    <property type="entry name" value="RNase_P_CS"/>
</dbReference>
<dbReference type="NCBIfam" id="TIGR00188">
    <property type="entry name" value="rnpA"/>
    <property type="match status" value="1"/>
</dbReference>
<dbReference type="PANTHER" id="PTHR33992">
    <property type="entry name" value="RIBONUCLEASE P PROTEIN COMPONENT"/>
    <property type="match status" value="1"/>
</dbReference>
<dbReference type="PANTHER" id="PTHR33992:SF1">
    <property type="entry name" value="RIBONUCLEASE P PROTEIN COMPONENT"/>
    <property type="match status" value="1"/>
</dbReference>
<dbReference type="Pfam" id="PF00825">
    <property type="entry name" value="Ribonuclease_P"/>
    <property type="match status" value="1"/>
</dbReference>
<dbReference type="SUPFAM" id="SSF54211">
    <property type="entry name" value="Ribosomal protein S5 domain 2-like"/>
    <property type="match status" value="1"/>
</dbReference>
<dbReference type="PROSITE" id="PS00648">
    <property type="entry name" value="RIBONUCLEASE_P"/>
    <property type="match status" value="1"/>
</dbReference>
<name>RNPA_SHESR</name>
<evidence type="ECO:0000255" key="1">
    <source>
        <dbReference type="HAMAP-Rule" id="MF_00227"/>
    </source>
</evidence>
<sequence length="118" mass="13828">MTSYTFTRELRLLTPAQFKSVFSNPIKASSAEITLLAIPNSEQHPRLGLTVAKRYVKRANQRNRIKRVIRDSFRLNQHDIPHLDIVVLVRNGVMEMENAEINKLIEKLWRKLSRRYNG</sequence>
<gene>
    <name evidence="1" type="primary">rnpA</name>
    <name type="ordered locus">Shewmr7_4034</name>
</gene>
<feature type="chain" id="PRO_1000021463" description="Ribonuclease P protein component">
    <location>
        <begin position="1"/>
        <end position="118"/>
    </location>
</feature>